<accession>Q99J93</accession>
<accession>Q3TIG4</accession>
<proteinExistence type="evidence at protein level"/>
<keyword id="KW-0007">Acetylation</keyword>
<keyword id="KW-0051">Antiviral defense</keyword>
<keyword id="KW-1003">Cell membrane</keyword>
<keyword id="KW-0967">Endosome</keyword>
<keyword id="KW-0391">Immunity</keyword>
<keyword id="KW-0399">Innate immunity</keyword>
<keyword id="KW-0449">Lipoprotein</keyword>
<keyword id="KW-0458">Lysosome</keyword>
<keyword id="KW-0472">Membrane</keyword>
<keyword id="KW-0564">Palmitate</keyword>
<keyword id="KW-0597">Phosphoprotein</keyword>
<keyword id="KW-1185">Reference proteome</keyword>
<keyword id="KW-0812">Transmembrane</keyword>
<keyword id="KW-1133">Transmembrane helix</keyword>
<gene>
    <name type="primary">Ifitm2</name>
</gene>
<name>IFM2_MOUSE</name>
<dbReference type="EMBL" id="AY082486">
    <property type="protein sequence ID" value="AAM03318.1"/>
    <property type="molecule type" value="mRNA"/>
</dbReference>
<dbReference type="EMBL" id="AK141392">
    <property type="protein sequence ID" value="BAE24670.1"/>
    <property type="molecule type" value="mRNA"/>
</dbReference>
<dbReference type="EMBL" id="AK167865">
    <property type="protein sequence ID" value="BAE39882.1"/>
    <property type="molecule type" value="mRNA"/>
</dbReference>
<dbReference type="EMBL" id="CH466531">
    <property type="protein sequence ID" value="EDL17975.1"/>
    <property type="molecule type" value="Genomic_DNA"/>
</dbReference>
<dbReference type="EMBL" id="BC002102">
    <property type="protein sequence ID" value="AAH02102.1"/>
    <property type="molecule type" value="mRNA"/>
</dbReference>
<dbReference type="EMBL" id="BC002160">
    <property type="protein sequence ID" value="AAH02160.1"/>
    <property type="molecule type" value="mRNA"/>
</dbReference>
<dbReference type="EMBL" id="BC084679">
    <property type="protein sequence ID" value="AAH84679.1"/>
    <property type="molecule type" value="mRNA"/>
</dbReference>
<dbReference type="CCDS" id="CCDS21994.1"/>
<dbReference type="RefSeq" id="NP_109619.1">
    <property type="nucleotide sequence ID" value="NM_030694.2"/>
</dbReference>
<dbReference type="RefSeq" id="XP_030098981.1">
    <property type="nucleotide sequence ID" value="XM_030243121.2"/>
</dbReference>
<dbReference type="RefSeq" id="XP_036009488.1">
    <property type="nucleotide sequence ID" value="XM_036153595.1"/>
</dbReference>
<dbReference type="BioGRID" id="219823">
    <property type="interactions" value="4"/>
</dbReference>
<dbReference type="FunCoup" id="Q99J93">
    <property type="interactions" value="294"/>
</dbReference>
<dbReference type="STRING" id="10090.ENSMUSP00000071470"/>
<dbReference type="iPTMnet" id="Q99J93"/>
<dbReference type="PhosphoSitePlus" id="Q99J93"/>
<dbReference type="SwissPalm" id="Q99J93"/>
<dbReference type="jPOST" id="Q99J93"/>
<dbReference type="PaxDb" id="10090-ENSMUSP00000071470"/>
<dbReference type="PeptideAtlas" id="Q99J93"/>
<dbReference type="ProteomicsDB" id="267280"/>
<dbReference type="Pumba" id="Q99J93"/>
<dbReference type="Ensembl" id="ENSMUST00000081649.10">
    <property type="protein sequence ID" value="ENSMUSP00000071470.9"/>
    <property type="gene ID" value="ENSMUSG00000060591.10"/>
</dbReference>
<dbReference type="GeneID" id="80876"/>
<dbReference type="KEGG" id="mmu:80876"/>
<dbReference type="UCSC" id="uc009kiz.1">
    <property type="organism name" value="mouse"/>
</dbReference>
<dbReference type="AGR" id="MGI:1933382"/>
<dbReference type="CTD" id="10581"/>
<dbReference type="MGI" id="MGI:1933382">
    <property type="gene designation" value="Ifitm2"/>
</dbReference>
<dbReference type="VEuPathDB" id="HostDB:ENSMUSG00000060591"/>
<dbReference type="eggNOG" id="ENOG502S9XK">
    <property type="taxonomic scope" value="Eukaryota"/>
</dbReference>
<dbReference type="GeneTree" id="ENSGT00950000182857"/>
<dbReference type="HOGENOM" id="CLU_124511_3_0_1"/>
<dbReference type="InParanoid" id="Q99J93"/>
<dbReference type="OMA" id="WAPWITT"/>
<dbReference type="OrthoDB" id="9906841at2759"/>
<dbReference type="PhylomeDB" id="Q99J93"/>
<dbReference type="TreeFam" id="TF334894"/>
<dbReference type="Reactome" id="R-MMU-198933">
    <property type="pathway name" value="Immunoregulatory interactions between a Lymphoid and a non-Lymphoid cell"/>
</dbReference>
<dbReference type="BioGRID-ORCS" id="80876">
    <property type="hits" value="5 hits in 78 CRISPR screens"/>
</dbReference>
<dbReference type="ChiTaRS" id="Ifitm2">
    <property type="organism name" value="mouse"/>
</dbReference>
<dbReference type="PRO" id="PR:Q99J93"/>
<dbReference type="Proteomes" id="UP000000589">
    <property type="component" value="Chromosome 7"/>
</dbReference>
<dbReference type="RNAct" id="Q99J93">
    <property type="molecule type" value="protein"/>
</dbReference>
<dbReference type="Bgee" id="ENSMUSG00000060591">
    <property type="expression patterns" value="Expressed in adrenal gland and 71 other cell types or tissues"/>
</dbReference>
<dbReference type="GO" id="GO:0031902">
    <property type="term" value="C:late endosome membrane"/>
    <property type="evidence" value="ECO:0000250"/>
    <property type="project" value="UniProtKB"/>
</dbReference>
<dbReference type="GO" id="GO:0005765">
    <property type="term" value="C:lysosomal membrane"/>
    <property type="evidence" value="ECO:0000250"/>
    <property type="project" value="UniProtKB"/>
</dbReference>
<dbReference type="GO" id="GO:0005886">
    <property type="term" value="C:plasma membrane"/>
    <property type="evidence" value="ECO:0007669"/>
    <property type="project" value="UniProtKB-SubCell"/>
</dbReference>
<dbReference type="GO" id="GO:0032991">
    <property type="term" value="C:protein-containing complex"/>
    <property type="evidence" value="ECO:0000266"/>
    <property type="project" value="MGI"/>
</dbReference>
<dbReference type="GO" id="GO:0035458">
    <property type="term" value="P:cellular response to interferon-beta"/>
    <property type="evidence" value="ECO:0000250"/>
    <property type="project" value="UniProtKB"/>
</dbReference>
<dbReference type="GO" id="GO:0051607">
    <property type="term" value="P:defense response to virus"/>
    <property type="evidence" value="ECO:0000314"/>
    <property type="project" value="MGI"/>
</dbReference>
<dbReference type="GO" id="GO:0046597">
    <property type="term" value="P:host-mediated suppression of symbiont invasion"/>
    <property type="evidence" value="ECO:0000314"/>
    <property type="project" value="UniProtKB"/>
</dbReference>
<dbReference type="GO" id="GO:0009615">
    <property type="term" value="P:response to virus"/>
    <property type="evidence" value="ECO:0000314"/>
    <property type="project" value="UniProtKB"/>
</dbReference>
<dbReference type="InterPro" id="IPR007593">
    <property type="entry name" value="CD225/Dispanin_fam"/>
</dbReference>
<dbReference type="InterPro" id="IPR051517">
    <property type="entry name" value="IFITM_antiviral_protein"/>
</dbReference>
<dbReference type="PANTHER" id="PTHR13999">
    <property type="entry name" value="INTERFERON INDUCIBLE TRANSMEMBRANE PROTEIN"/>
    <property type="match status" value="1"/>
</dbReference>
<dbReference type="PANTHER" id="PTHR13999:SF7">
    <property type="entry name" value="INTERFERON-INDUCED TRANSMEMBRANE PROTEIN 2"/>
    <property type="match status" value="1"/>
</dbReference>
<dbReference type="Pfam" id="PF04505">
    <property type="entry name" value="CD225"/>
    <property type="match status" value="1"/>
</dbReference>
<evidence type="ECO:0000250" key="1">
    <source>
        <dbReference type="UniProtKB" id="P13164"/>
    </source>
</evidence>
<evidence type="ECO:0000250" key="2">
    <source>
        <dbReference type="UniProtKB" id="Q01629"/>
    </source>
</evidence>
<evidence type="ECO:0000255" key="3"/>
<evidence type="ECO:0000269" key="4">
    <source>
    </source>
</evidence>
<evidence type="ECO:0000269" key="5">
    <source>
    </source>
</evidence>
<evidence type="ECO:0000269" key="6">
    <source>
    </source>
</evidence>
<evidence type="ECO:0000305" key="7"/>
<organism>
    <name type="scientific">Mus musculus</name>
    <name type="common">Mouse</name>
    <dbReference type="NCBI Taxonomy" id="10090"/>
    <lineage>
        <taxon>Eukaryota</taxon>
        <taxon>Metazoa</taxon>
        <taxon>Chordata</taxon>
        <taxon>Craniata</taxon>
        <taxon>Vertebrata</taxon>
        <taxon>Euteleostomi</taxon>
        <taxon>Mammalia</taxon>
        <taxon>Eutheria</taxon>
        <taxon>Euarchontoglires</taxon>
        <taxon>Glires</taxon>
        <taxon>Rodentia</taxon>
        <taxon>Myomorpha</taxon>
        <taxon>Muroidea</taxon>
        <taxon>Muridae</taxon>
        <taxon>Murinae</taxon>
        <taxon>Mus</taxon>
        <taxon>Mus</taxon>
    </lineage>
</organism>
<comment type="function">
    <text evidence="6">IFN-induced antiviral protein which inhibits the entry of viruses to the host cell cytoplasm, permitting endocytosis, but preventing subsequent viral fusion and release of viral contents into the cytosol. Active against multiple viruses, including influenza A virus, SARS coronavirus (SARS-CoV), Marburg virus (MARV) and Ebola virus (EBOV), Dengue virus (DNV) and West Nile virus (WNV). Can inhibit: influenza virus hemagglutinin protein-mediated viral entry, MARV and EBOV GP1,2-mediated viral entry and SARS-CoV S protein-mediated viral entry. Induces cell cycle arrest and mediates apoptosis by caspase activation and in p53-independent manner.</text>
</comment>
<comment type="subunit">
    <text evidence="5">Interacts with CD81.</text>
</comment>
<comment type="subcellular location">
    <subcellularLocation>
        <location evidence="2">Cell membrane</location>
        <topology evidence="2">Single-pass type II membrane protein</topology>
    </subcellularLocation>
    <subcellularLocation>
        <location evidence="2">Lysosome membrane</location>
        <topology evidence="2">Single-pass type II membrane protein</topology>
    </subcellularLocation>
    <subcellularLocation>
        <location evidence="2">Late endosome membrane</location>
        <topology evidence="2">Single-pass type II membrane protein</topology>
    </subcellularLocation>
</comment>
<comment type="tissue specificity">
    <text evidence="4">Predominantly expressed in nascent primordial germ cells, as well as in gonadal germ cells.</text>
</comment>
<comment type="developmental stage">
    <text evidence="4">From 5.5 dpc to 7.5 dpc expressed within the epiblast. At 8.5 dpc expressed throughout the entire embryo. Expressed in the gonadal germ cells at 11.5 dpc/12.5.</text>
</comment>
<comment type="PTM">
    <text evidence="2">Palmitoylation on membrane-proximal cysteines controls clustering in membrane compartments and antiviral activity.</text>
</comment>
<comment type="PTM">
    <text evidence="2">Phosphorylation at Tyr-19 is required for endosomal and lysosomal location.</text>
</comment>
<comment type="similarity">
    <text evidence="7">Belongs to the CD225/Dispanin family.</text>
</comment>
<sequence>MSHNSQAFLSTNAGLPPSYETIKEEYGVTELGEPSNSAVVRTTVINMPREVSVPDHVVWSLFNTLFFNACCLGFVAYAYSVKSRDRKMVGDVVGAQAYASTAKCLNISSLIFSILMVIICIIIFSTTSVVVFQSFAQRTPHSGF</sequence>
<protein>
    <recommendedName>
        <fullName>Interferon-induced transmembrane protein 2</fullName>
    </recommendedName>
    <alternativeName>
        <fullName>Dispanin subfamily A member 2c</fullName>
        <shortName>DSPA2c</shortName>
    </alternativeName>
    <alternativeName>
        <fullName>Fragilis protein 3</fullName>
    </alternativeName>
</protein>
<reference key="1">
    <citation type="journal article" date="2003" name="BMC Dev. Biol.">
        <title>The fragilis interferon-inducible gene family of transmembrane proteins is associated with germ cell specification in mice.</title>
        <authorList>
            <person name="Lange U.C."/>
            <person name="Saitou M."/>
            <person name="Western P.S."/>
            <person name="Barton S.C."/>
            <person name="Surani M.A."/>
        </authorList>
    </citation>
    <scope>NUCLEOTIDE SEQUENCE [MRNA]</scope>
    <scope>TISSUE SPECIFICITY</scope>
    <scope>DEVELOPMENTAL STAGE</scope>
</reference>
<reference key="2">
    <citation type="journal article" date="2005" name="Science">
        <title>The transcriptional landscape of the mammalian genome.</title>
        <authorList>
            <person name="Carninci P."/>
            <person name="Kasukawa T."/>
            <person name="Katayama S."/>
            <person name="Gough J."/>
            <person name="Frith M.C."/>
            <person name="Maeda N."/>
            <person name="Oyama R."/>
            <person name="Ravasi T."/>
            <person name="Lenhard B."/>
            <person name="Wells C."/>
            <person name="Kodzius R."/>
            <person name="Shimokawa K."/>
            <person name="Bajic V.B."/>
            <person name="Brenner S.E."/>
            <person name="Batalov S."/>
            <person name="Forrest A.R."/>
            <person name="Zavolan M."/>
            <person name="Davis M.J."/>
            <person name="Wilming L.G."/>
            <person name="Aidinis V."/>
            <person name="Allen J.E."/>
            <person name="Ambesi-Impiombato A."/>
            <person name="Apweiler R."/>
            <person name="Aturaliya R.N."/>
            <person name="Bailey T.L."/>
            <person name="Bansal M."/>
            <person name="Baxter L."/>
            <person name="Beisel K.W."/>
            <person name="Bersano T."/>
            <person name="Bono H."/>
            <person name="Chalk A.M."/>
            <person name="Chiu K.P."/>
            <person name="Choudhary V."/>
            <person name="Christoffels A."/>
            <person name="Clutterbuck D.R."/>
            <person name="Crowe M.L."/>
            <person name="Dalla E."/>
            <person name="Dalrymple B.P."/>
            <person name="de Bono B."/>
            <person name="Della Gatta G."/>
            <person name="di Bernardo D."/>
            <person name="Down T."/>
            <person name="Engstrom P."/>
            <person name="Fagiolini M."/>
            <person name="Faulkner G."/>
            <person name="Fletcher C.F."/>
            <person name="Fukushima T."/>
            <person name="Furuno M."/>
            <person name="Futaki S."/>
            <person name="Gariboldi M."/>
            <person name="Georgii-Hemming P."/>
            <person name="Gingeras T.R."/>
            <person name="Gojobori T."/>
            <person name="Green R.E."/>
            <person name="Gustincich S."/>
            <person name="Harbers M."/>
            <person name="Hayashi Y."/>
            <person name="Hensch T.K."/>
            <person name="Hirokawa N."/>
            <person name="Hill D."/>
            <person name="Huminiecki L."/>
            <person name="Iacono M."/>
            <person name="Ikeo K."/>
            <person name="Iwama A."/>
            <person name="Ishikawa T."/>
            <person name="Jakt M."/>
            <person name="Kanapin A."/>
            <person name="Katoh M."/>
            <person name="Kawasawa Y."/>
            <person name="Kelso J."/>
            <person name="Kitamura H."/>
            <person name="Kitano H."/>
            <person name="Kollias G."/>
            <person name="Krishnan S.P."/>
            <person name="Kruger A."/>
            <person name="Kummerfeld S.K."/>
            <person name="Kurochkin I.V."/>
            <person name="Lareau L.F."/>
            <person name="Lazarevic D."/>
            <person name="Lipovich L."/>
            <person name="Liu J."/>
            <person name="Liuni S."/>
            <person name="McWilliam S."/>
            <person name="Madan Babu M."/>
            <person name="Madera M."/>
            <person name="Marchionni L."/>
            <person name="Matsuda H."/>
            <person name="Matsuzawa S."/>
            <person name="Miki H."/>
            <person name="Mignone F."/>
            <person name="Miyake S."/>
            <person name="Morris K."/>
            <person name="Mottagui-Tabar S."/>
            <person name="Mulder N."/>
            <person name="Nakano N."/>
            <person name="Nakauchi H."/>
            <person name="Ng P."/>
            <person name="Nilsson R."/>
            <person name="Nishiguchi S."/>
            <person name="Nishikawa S."/>
            <person name="Nori F."/>
            <person name="Ohara O."/>
            <person name="Okazaki Y."/>
            <person name="Orlando V."/>
            <person name="Pang K.C."/>
            <person name="Pavan W.J."/>
            <person name="Pavesi G."/>
            <person name="Pesole G."/>
            <person name="Petrovsky N."/>
            <person name="Piazza S."/>
            <person name="Reed J."/>
            <person name="Reid J.F."/>
            <person name="Ring B.Z."/>
            <person name="Ringwald M."/>
            <person name="Rost B."/>
            <person name="Ruan Y."/>
            <person name="Salzberg S.L."/>
            <person name="Sandelin A."/>
            <person name="Schneider C."/>
            <person name="Schoenbach C."/>
            <person name="Sekiguchi K."/>
            <person name="Semple C.A."/>
            <person name="Seno S."/>
            <person name="Sessa L."/>
            <person name="Sheng Y."/>
            <person name="Shibata Y."/>
            <person name="Shimada H."/>
            <person name="Shimada K."/>
            <person name="Silva D."/>
            <person name="Sinclair B."/>
            <person name="Sperling S."/>
            <person name="Stupka E."/>
            <person name="Sugiura K."/>
            <person name="Sultana R."/>
            <person name="Takenaka Y."/>
            <person name="Taki K."/>
            <person name="Tammoja K."/>
            <person name="Tan S.L."/>
            <person name="Tang S."/>
            <person name="Taylor M.S."/>
            <person name="Tegner J."/>
            <person name="Teichmann S.A."/>
            <person name="Ueda H.R."/>
            <person name="van Nimwegen E."/>
            <person name="Verardo R."/>
            <person name="Wei C.L."/>
            <person name="Yagi K."/>
            <person name="Yamanishi H."/>
            <person name="Zabarovsky E."/>
            <person name="Zhu S."/>
            <person name="Zimmer A."/>
            <person name="Hide W."/>
            <person name="Bult C."/>
            <person name="Grimmond S.M."/>
            <person name="Teasdale R.D."/>
            <person name="Liu E.T."/>
            <person name="Brusic V."/>
            <person name="Quackenbush J."/>
            <person name="Wahlestedt C."/>
            <person name="Mattick J.S."/>
            <person name="Hume D.A."/>
            <person name="Kai C."/>
            <person name="Sasaki D."/>
            <person name="Tomaru Y."/>
            <person name="Fukuda S."/>
            <person name="Kanamori-Katayama M."/>
            <person name="Suzuki M."/>
            <person name="Aoki J."/>
            <person name="Arakawa T."/>
            <person name="Iida J."/>
            <person name="Imamura K."/>
            <person name="Itoh M."/>
            <person name="Kato T."/>
            <person name="Kawaji H."/>
            <person name="Kawagashira N."/>
            <person name="Kawashima T."/>
            <person name="Kojima M."/>
            <person name="Kondo S."/>
            <person name="Konno H."/>
            <person name="Nakano K."/>
            <person name="Ninomiya N."/>
            <person name="Nishio T."/>
            <person name="Okada M."/>
            <person name="Plessy C."/>
            <person name="Shibata K."/>
            <person name="Shiraki T."/>
            <person name="Suzuki S."/>
            <person name="Tagami M."/>
            <person name="Waki K."/>
            <person name="Watahiki A."/>
            <person name="Okamura-Oho Y."/>
            <person name="Suzuki H."/>
            <person name="Kawai J."/>
            <person name="Hayashizaki Y."/>
        </authorList>
    </citation>
    <scope>NUCLEOTIDE SEQUENCE [LARGE SCALE MRNA]</scope>
    <source>
        <strain>BALB/cJ</strain>
        <strain>C57BL/6J</strain>
        <tissue>Embryo</tissue>
    </source>
</reference>
<reference key="3">
    <citation type="submission" date="2005-07" db="EMBL/GenBank/DDBJ databases">
        <authorList>
            <person name="Mural R.J."/>
            <person name="Adams M.D."/>
            <person name="Myers E.W."/>
            <person name="Smith H.O."/>
            <person name="Venter J.C."/>
        </authorList>
    </citation>
    <scope>NUCLEOTIDE SEQUENCE [LARGE SCALE GENOMIC DNA]</scope>
</reference>
<reference key="4">
    <citation type="journal article" date="2004" name="Genome Res.">
        <title>The status, quality, and expansion of the NIH full-length cDNA project: the Mammalian Gene Collection (MGC).</title>
        <authorList>
            <consortium name="The MGC Project Team"/>
        </authorList>
    </citation>
    <scope>NUCLEOTIDE SEQUENCE [LARGE SCALE MRNA]</scope>
    <source>
        <strain>FVB/N</strain>
        <strain>FVB/N-3</strain>
        <tissue>Mammary tumor</tissue>
    </source>
</reference>
<reference key="5">
    <citation type="journal article" date="2006" name="Genes Immun.">
        <title>Expression of the mouse fragilis gene products in immune cells and association with receptor signaling complexes.</title>
        <authorList>
            <person name="Smith R.A."/>
            <person name="Young J."/>
            <person name="Weis J.J."/>
            <person name="Weis J.H."/>
        </authorList>
    </citation>
    <scope>INTERACTION WITH CD81</scope>
</reference>
<reference key="6">
    <citation type="journal article" date="2010" name="Cell">
        <title>A tissue-specific atlas of mouse protein phosphorylation and expression.</title>
        <authorList>
            <person name="Huttlin E.L."/>
            <person name="Jedrychowski M.P."/>
            <person name="Elias J.E."/>
            <person name="Goswami T."/>
            <person name="Rad R."/>
            <person name="Beausoleil S.A."/>
            <person name="Villen J."/>
            <person name="Haas W."/>
            <person name="Sowa M.E."/>
            <person name="Gygi S.P."/>
        </authorList>
    </citation>
    <scope>IDENTIFICATION BY MASS SPECTROMETRY [LARGE SCALE ANALYSIS]</scope>
    <source>
        <tissue>Heart</tissue>
        <tissue>Kidney</tissue>
        <tissue>Lung</tissue>
        <tissue>Testis</tissue>
    </source>
</reference>
<reference key="7">
    <citation type="journal article" date="2011" name="J. Interferon Cytokine Res.">
        <title>The small interferon-induced transmembrane genes and proteins.</title>
        <authorList>
            <person name="Siegrist F."/>
            <person name="Ebeling M."/>
            <person name="Certa U."/>
        </authorList>
    </citation>
    <scope>REVIEW</scope>
</reference>
<reference key="8">
    <citation type="journal article" date="2011" name="PLoS Pathog.">
        <title>Distinct patterns of IFITM-mediated restriction of filoviruses, SARS coronavirus, and influenza A virus.</title>
        <authorList>
            <person name="Huang I.C."/>
            <person name="Bailey C.C."/>
            <person name="Weyer J.L."/>
            <person name="Radoshitzky S.R."/>
            <person name="Becker M.M."/>
            <person name="Chiang J.J."/>
            <person name="Brass A.L."/>
            <person name="Ahmed A.A."/>
            <person name="Chi X."/>
            <person name="Dong L."/>
            <person name="Longobardi L.E."/>
            <person name="Boltz D."/>
            <person name="Kuhn J.H."/>
            <person name="Elledge S.J."/>
            <person name="Bavari S."/>
            <person name="Denison M.R."/>
            <person name="Choe H."/>
            <person name="Farzan M."/>
        </authorList>
    </citation>
    <scope>FUNCTION</scope>
</reference>
<reference key="9">
    <citation type="journal article" date="2012" name="PLoS ONE">
        <title>The dispanins: a novel gene family of ancient origin that contains 14 human members.</title>
        <authorList>
            <person name="Sallman Almen M."/>
            <person name="Bringeland N."/>
            <person name="Fredriksson R."/>
            <person name="Schioth H.B."/>
        </authorList>
    </citation>
    <scope>GENE FAMILY</scope>
</reference>
<feature type="chain" id="PRO_0000398566" description="Interferon-induced transmembrane protein 2">
    <location>
        <begin position="1"/>
        <end position="144"/>
    </location>
</feature>
<feature type="topological domain" description="Cytoplasmic" evidence="3">
    <location>
        <begin position="1"/>
        <end position="56"/>
    </location>
</feature>
<feature type="intramembrane region" description="Helical" evidence="1">
    <location>
        <begin position="57"/>
        <end position="77"/>
    </location>
</feature>
<feature type="topological domain" description="Cytoplasmic" evidence="3">
    <location>
        <begin position="78"/>
        <end position="110"/>
    </location>
</feature>
<feature type="transmembrane region" description="Helical" evidence="3">
    <location>
        <begin position="111"/>
        <end position="131"/>
    </location>
</feature>
<feature type="topological domain" description="Extracellular" evidence="3">
    <location>
        <begin position="132"/>
        <end position="144"/>
    </location>
</feature>
<feature type="modified residue" description="N-acetylmethionine" evidence="2">
    <location>
        <position position="1"/>
    </location>
</feature>
<feature type="modified residue" description="Phosphotyrosine" evidence="2">
    <location>
        <position position="19"/>
    </location>
</feature>
<feature type="lipid moiety-binding region" description="S-palmitoyl cysteine" evidence="2">
    <location>
        <position position="70"/>
    </location>
</feature>
<feature type="lipid moiety-binding region" description="S-palmitoyl cysteine" evidence="2">
    <location>
        <position position="71"/>
    </location>
</feature>
<feature type="lipid moiety-binding region" description="S-palmitoyl cysteine" evidence="2">
    <location>
        <position position="104"/>
    </location>
</feature>